<comment type="function">
    <text evidence="1">Removes the pyruvyl group from chorismate, with concomitant aromatization of the ring, to provide 4-hydroxybenzoate (4HB) for the ubiquinone pathway.</text>
</comment>
<comment type="catalytic activity">
    <reaction evidence="1">
        <text>chorismate = 4-hydroxybenzoate + pyruvate</text>
        <dbReference type="Rhea" id="RHEA:16505"/>
        <dbReference type="ChEBI" id="CHEBI:15361"/>
        <dbReference type="ChEBI" id="CHEBI:17879"/>
        <dbReference type="ChEBI" id="CHEBI:29748"/>
        <dbReference type="EC" id="4.1.3.40"/>
    </reaction>
</comment>
<comment type="pathway">
    <text evidence="1">Cofactor biosynthesis; ubiquinone biosynthesis.</text>
</comment>
<comment type="subcellular location">
    <subcellularLocation>
        <location evidence="1">Cytoplasm</location>
    </subcellularLocation>
</comment>
<comment type="similarity">
    <text evidence="1">Belongs to the UbiC family.</text>
</comment>
<proteinExistence type="inferred from homology"/>
<gene>
    <name evidence="1" type="primary">ubiC</name>
    <name type="ordered locus">CBU_0054</name>
</gene>
<accession>Q83F94</accession>
<feature type="chain" id="PRO_0000240544" description="Probable chorismate pyruvate-lyase">
    <location>
        <begin position="1"/>
        <end position="185"/>
    </location>
</feature>
<feature type="binding site" evidence="1">
    <location>
        <position position="75"/>
    </location>
    <ligand>
        <name>substrate</name>
    </ligand>
</feature>
<feature type="binding site" evidence="1">
    <location>
        <position position="113"/>
    </location>
    <ligand>
        <name>substrate</name>
    </ligand>
</feature>
<feature type="binding site" evidence="1">
    <location>
        <position position="170"/>
    </location>
    <ligand>
        <name>substrate</name>
    </ligand>
</feature>
<keyword id="KW-0963">Cytoplasm</keyword>
<keyword id="KW-0456">Lyase</keyword>
<keyword id="KW-0670">Pyruvate</keyword>
<keyword id="KW-1185">Reference proteome</keyword>
<keyword id="KW-0831">Ubiquinone biosynthesis</keyword>
<evidence type="ECO:0000255" key="1">
    <source>
        <dbReference type="HAMAP-Rule" id="MF_01632"/>
    </source>
</evidence>
<organism>
    <name type="scientific">Coxiella burnetii (strain RSA 493 / Nine Mile phase I)</name>
    <dbReference type="NCBI Taxonomy" id="227377"/>
    <lineage>
        <taxon>Bacteria</taxon>
        <taxon>Pseudomonadati</taxon>
        <taxon>Pseudomonadota</taxon>
        <taxon>Gammaproteobacteria</taxon>
        <taxon>Legionellales</taxon>
        <taxon>Coxiellaceae</taxon>
        <taxon>Coxiella</taxon>
    </lineage>
</organism>
<protein>
    <recommendedName>
        <fullName evidence="1">Probable chorismate pyruvate-lyase</fullName>
        <shortName evidence="1">CL</shortName>
        <shortName evidence="1">CPL</shortName>
        <ecNumber evidence="1">4.1.3.40</ecNumber>
    </recommendedName>
</protein>
<reference key="1">
    <citation type="journal article" date="2003" name="Proc. Natl. Acad. Sci. U.S.A.">
        <title>Complete genome sequence of the Q-fever pathogen, Coxiella burnetii.</title>
        <authorList>
            <person name="Seshadri R."/>
            <person name="Paulsen I.T."/>
            <person name="Eisen J.A."/>
            <person name="Read T.D."/>
            <person name="Nelson K.E."/>
            <person name="Nelson W.C."/>
            <person name="Ward N.L."/>
            <person name="Tettelin H."/>
            <person name="Davidsen T.M."/>
            <person name="Beanan M.J."/>
            <person name="DeBoy R.T."/>
            <person name="Daugherty S.C."/>
            <person name="Brinkac L.M."/>
            <person name="Madupu R."/>
            <person name="Dodson R.J."/>
            <person name="Khouri H.M."/>
            <person name="Lee K.H."/>
            <person name="Carty H.A."/>
            <person name="Scanlan D."/>
            <person name="Heinzen R.A."/>
            <person name="Thompson H.A."/>
            <person name="Samuel J.E."/>
            <person name="Fraser C.M."/>
            <person name="Heidelberg J.F."/>
        </authorList>
    </citation>
    <scope>NUCLEOTIDE SEQUENCE [LARGE SCALE GENOMIC DNA]</scope>
    <source>
        <strain>RSA 493 / Nine Mile phase I</strain>
    </source>
</reference>
<name>UBIC_COXBU</name>
<sequence length="185" mass="21536">MKKQLFWAPQNEIPSTLWTANERSWLTHPGSLTQRLRKTTDGQIQHHLLREVFDAPVDEETQLLGISQPELALIREIEWRYFESLWVAGRVVIPKKTLEREGSPLNHIGERSLGDILFANAKFTRGDLEFRQITADHPYYFYVKEIANGSCIWARRSLFYFERDPLLVSEIFSPALFLESSVSND</sequence>
<dbReference type="EC" id="4.1.3.40" evidence="1"/>
<dbReference type="EMBL" id="AE016828">
    <property type="protein sequence ID" value="AAO89621.1"/>
    <property type="molecule type" value="Genomic_DNA"/>
</dbReference>
<dbReference type="RefSeq" id="NP_819107.1">
    <property type="nucleotide sequence ID" value="NC_002971.3"/>
</dbReference>
<dbReference type="RefSeq" id="WP_010957348.1">
    <property type="nucleotide sequence ID" value="NC_002971.4"/>
</dbReference>
<dbReference type="SMR" id="Q83F94"/>
<dbReference type="STRING" id="227377.CBU_0054"/>
<dbReference type="EnsemblBacteria" id="AAO89621">
    <property type="protein sequence ID" value="AAO89621"/>
    <property type="gene ID" value="CBU_0054"/>
</dbReference>
<dbReference type="GeneID" id="1207916"/>
<dbReference type="KEGG" id="cbu:CBU_0054"/>
<dbReference type="PATRIC" id="fig|227377.7.peg.56"/>
<dbReference type="eggNOG" id="COG3161">
    <property type="taxonomic scope" value="Bacteria"/>
</dbReference>
<dbReference type="HOGENOM" id="CLU_096824_3_0_6"/>
<dbReference type="OrthoDB" id="5646761at2"/>
<dbReference type="UniPathway" id="UPA00232"/>
<dbReference type="Proteomes" id="UP000002671">
    <property type="component" value="Chromosome"/>
</dbReference>
<dbReference type="GO" id="GO:0005829">
    <property type="term" value="C:cytosol"/>
    <property type="evidence" value="ECO:0000318"/>
    <property type="project" value="GO_Central"/>
</dbReference>
<dbReference type="GO" id="GO:0008813">
    <property type="term" value="F:chorismate lyase activity"/>
    <property type="evidence" value="ECO:0000318"/>
    <property type="project" value="GO_Central"/>
</dbReference>
<dbReference type="GO" id="GO:0042866">
    <property type="term" value="P:pyruvate biosynthetic process"/>
    <property type="evidence" value="ECO:0007669"/>
    <property type="project" value="UniProtKB-UniRule"/>
</dbReference>
<dbReference type="GO" id="GO:0006744">
    <property type="term" value="P:ubiquinone biosynthetic process"/>
    <property type="evidence" value="ECO:0000318"/>
    <property type="project" value="GO_Central"/>
</dbReference>
<dbReference type="FunFam" id="3.40.1410.10:FF:000020">
    <property type="entry name" value="Chorismate pyruvate-lyase"/>
    <property type="match status" value="1"/>
</dbReference>
<dbReference type="Gene3D" id="3.40.1410.10">
    <property type="entry name" value="Chorismate lyase-like"/>
    <property type="match status" value="1"/>
</dbReference>
<dbReference type="HAMAP" id="MF_01632">
    <property type="entry name" value="UbiC"/>
    <property type="match status" value="1"/>
</dbReference>
<dbReference type="InterPro" id="IPR007440">
    <property type="entry name" value="Chorismate--pyruvate_lyase"/>
</dbReference>
<dbReference type="InterPro" id="IPR028978">
    <property type="entry name" value="Chorismate_lyase_/UTRA_dom_sf"/>
</dbReference>
<dbReference type="PANTHER" id="PTHR38683">
    <property type="entry name" value="CHORISMATE PYRUVATE-LYASE"/>
    <property type="match status" value="1"/>
</dbReference>
<dbReference type="PANTHER" id="PTHR38683:SF1">
    <property type="entry name" value="CHORISMATE PYRUVATE-LYASE"/>
    <property type="match status" value="1"/>
</dbReference>
<dbReference type="Pfam" id="PF04345">
    <property type="entry name" value="Chor_lyase"/>
    <property type="match status" value="1"/>
</dbReference>
<dbReference type="SUPFAM" id="SSF64288">
    <property type="entry name" value="Chorismate lyase-like"/>
    <property type="match status" value="1"/>
</dbReference>